<feature type="chain" id="PRO_0000050220" description="Putative regulatory protein ABC2323">
    <location>
        <begin position="1"/>
        <end position="87"/>
    </location>
</feature>
<accession>Q5WFK2</accession>
<comment type="similarity">
    <text evidence="1">Belongs to the RemA family.</text>
</comment>
<gene>
    <name type="ordered locus">ABC2323</name>
</gene>
<evidence type="ECO:0000255" key="1">
    <source>
        <dbReference type="HAMAP-Rule" id="MF_01503"/>
    </source>
</evidence>
<name>Y2323_SHOC1</name>
<sequence length="87" mass="9628">MTIKLINIGFGNIVSANRIISIVSPESAPIKRIMQEARDRNMLIDATYGRRTRAVIVTDSDHVILSAVQPETVAQRLHTKEDGVEDA</sequence>
<proteinExistence type="inferred from homology"/>
<protein>
    <recommendedName>
        <fullName evidence="1">Putative regulatory protein ABC2323</fullName>
    </recommendedName>
</protein>
<dbReference type="EMBL" id="AP006627">
    <property type="protein sequence ID" value="BAD64858.1"/>
    <property type="molecule type" value="Genomic_DNA"/>
</dbReference>
<dbReference type="SMR" id="Q5WFK2"/>
<dbReference type="STRING" id="66692.ABC2323"/>
<dbReference type="KEGG" id="bcl:ABC2323"/>
<dbReference type="eggNOG" id="COG2052">
    <property type="taxonomic scope" value="Bacteria"/>
</dbReference>
<dbReference type="HOGENOM" id="CLU_165326_0_0_9"/>
<dbReference type="OrthoDB" id="5432174at2"/>
<dbReference type="Proteomes" id="UP000001168">
    <property type="component" value="Chromosome"/>
</dbReference>
<dbReference type="HAMAP" id="MF_01503">
    <property type="entry name" value="RemA"/>
    <property type="match status" value="1"/>
</dbReference>
<dbReference type="InterPro" id="IPR007169">
    <property type="entry name" value="RemA-like"/>
</dbReference>
<dbReference type="NCBIfam" id="NF046064">
    <property type="entry name" value="MtxBflmRegRemA"/>
    <property type="match status" value="1"/>
</dbReference>
<dbReference type="NCBIfam" id="NF003315">
    <property type="entry name" value="PRK04323.1"/>
    <property type="match status" value="1"/>
</dbReference>
<dbReference type="PANTHER" id="PTHR38449:SF1">
    <property type="entry name" value="REGULATORY PROTEIN SSL2874-RELATED"/>
    <property type="match status" value="1"/>
</dbReference>
<dbReference type="PANTHER" id="PTHR38449">
    <property type="entry name" value="REGULATORY PROTEIN TM_1690-RELATED"/>
    <property type="match status" value="1"/>
</dbReference>
<dbReference type="Pfam" id="PF04025">
    <property type="entry name" value="RemA-like"/>
    <property type="match status" value="1"/>
</dbReference>
<keyword id="KW-1185">Reference proteome</keyword>
<organism>
    <name type="scientific">Shouchella clausii (strain KSM-K16)</name>
    <name type="common">Alkalihalobacillus clausii</name>
    <dbReference type="NCBI Taxonomy" id="66692"/>
    <lineage>
        <taxon>Bacteria</taxon>
        <taxon>Bacillati</taxon>
        <taxon>Bacillota</taxon>
        <taxon>Bacilli</taxon>
        <taxon>Bacillales</taxon>
        <taxon>Bacillaceae</taxon>
        <taxon>Shouchella</taxon>
    </lineage>
</organism>
<reference key="1">
    <citation type="submission" date="2003-10" db="EMBL/GenBank/DDBJ databases">
        <title>The complete genome sequence of the alkaliphilic Bacillus clausii KSM-K16.</title>
        <authorList>
            <person name="Takaki Y."/>
            <person name="Kageyama Y."/>
            <person name="Shimamura S."/>
            <person name="Suzuki H."/>
            <person name="Nishi S."/>
            <person name="Hatada Y."/>
            <person name="Kawai S."/>
            <person name="Ito S."/>
            <person name="Horikoshi K."/>
        </authorList>
    </citation>
    <scope>NUCLEOTIDE SEQUENCE [LARGE SCALE GENOMIC DNA]</scope>
    <source>
        <strain>KSM-K16</strain>
    </source>
</reference>